<name>RL17_MICAN</name>
<comment type="subunit">
    <text evidence="1">Part of the 50S ribosomal subunit. Contacts protein L32.</text>
</comment>
<comment type="similarity">
    <text evidence="1">Belongs to the bacterial ribosomal protein bL17 family.</text>
</comment>
<keyword id="KW-0687">Ribonucleoprotein</keyword>
<keyword id="KW-0689">Ribosomal protein</keyword>
<sequence>MRHRCKVPQLGLPADQRKALLRSLATQLILHGQITTTLAKAKAVRAEVDHIITLAKDGSLSARRQAMGYIYDKQLVHALFEGAQARYGNRNGGYTRVVRTLRRRGDNAPMAIIELM</sequence>
<reference key="1">
    <citation type="journal article" date="2007" name="DNA Res.">
        <title>Complete genomic structure of the bloom-forming toxic cyanobacterium Microcystis aeruginosa NIES-843.</title>
        <authorList>
            <person name="Kaneko T."/>
            <person name="Nakajima N."/>
            <person name="Okamoto S."/>
            <person name="Suzuki I."/>
            <person name="Tanabe Y."/>
            <person name="Tamaoki M."/>
            <person name="Nakamura Y."/>
            <person name="Kasai F."/>
            <person name="Watanabe A."/>
            <person name="Kawashima K."/>
            <person name="Kishida Y."/>
            <person name="Ono A."/>
            <person name="Shimizu Y."/>
            <person name="Takahashi C."/>
            <person name="Minami C."/>
            <person name="Fujishiro T."/>
            <person name="Kohara M."/>
            <person name="Katoh M."/>
            <person name="Nakazaki N."/>
            <person name="Nakayama S."/>
            <person name="Yamada M."/>
            <person name="Tabata S."/>
            <person name="Watanabe M.M."/>
        </authorList>
    </citation>
    <scope>NUCLEOTIDE SEQUENCE [LARGE SCALE GENOMIC DNA]</scope>
    <source>
        <strain>NIES-843 / IAM M-247</strain>
    </source>
</reference>
<organism>
    <name type="scientific">Microcystis aeruginosa (strain NIES-843 / IAM M-2473)</name>
    <dbReference type="NCBI Taxonomy" id="449447"/>
    <lineage>
        <taxon>Bacteria</taxon>
        <taxon>Bacillati</taxon>
        <taxon>Cyanobacteriota</taxon>
        <taxon>Cyanophyceae</taxon>
        <taxon>Oscillatoriophycideae</taxon>
        <taxon>Chroococcales</taxon>
        <taxon>Microcystaceae</taxon>
        <taxon>Microcystis</taxon>
    </lineage>
</organism>
<protein>
    <recommendedName>
        <fullName evidence="1">Large ribosomal subunit protein bL17</fullName>
    </recommendedName>
    <alternativeName>
        <fullName evidence="2">50S ribosomal protein L17</fullName>
    </alternativeName>
</protein>
<proteinExistence type="inferred from homology"/>
<accession>B0JY37</accession>
<gene>
    <name evidence="1" type="primary">rplQ</name>
    <name evidence="1" type="synonym">rpl17</name>
    <name type="ordered locus">MAE_52530</name>
</gene>
<feature type="chain" id="PRO_1000087179" description="Large ribosomal subunit protein bL17">
    <location>
        <begin position="1"/>
        <end position="116"/>
    </location>
</feature>
<evidence type="ECO:0000255" key="1">
    <source>
        <dbReference type="HAMAP-Rule" id="MF_01368"/>
    </source>
</evidence>
<evidence type="ECO:0000305" key="2"/>
<dbReference type="EMBL" id="AP009552">
    <property type="protein sequence ID" value="BAG05075.1"/>
    <property type="molecule type" value="Genomic_DNA"/>
</dbReference>
<dbReference type="RefSeq" id="WP_002760055.1">
    <property type="nucleotide sequence ID" value="NC_010296.1"/>
</dbReference>
<dbReference type="SMR" id="B0JY37"/>
<dbReference type="STRING" id="449447.MAE_52530"/>
<dbReference type="PaxDb" id="449447-MAE_52530"/>
<dbReference type="EnsemblBacteria" id="BAG05075">
    <property type="protein sequence ID" value="BAG05075"/>
    <property type="gene ID" value="MAE_52530"/>
</dbReference>
<dbReference type="KEGG" id="mar:MAE_52530"/>
<dbReference type="eggNOG" id="COG0203">
    <property type="taxonomic scope" value="Bacteria"/>
</dbReference>
<dbReference type="HOGENOM" id="CLU_074407_2_2_3"/>
<dbReference type="BioCyc" id="MAER449447:MAE_RS22835-MONOMER"/>
<dbReference type="Proteomes" id="UP000001510">
    <property type="component" value="Chromosome"/>
</dbReference>
<dbReference type="GO" id="GO:0022625">
    <property type="term" value="C:cytosolic large ribosomal subunit"/>
    <property type="evidence" value="ECO:0007669"/>
    <property type="project" value="TreeGrafter"/>
</dbReference>
<dbReference type="GO" id="GO:0003735">
    <property type="term" value="F:structural constituent of ribosome"/>
    <property type="evidence" value="ECO:0007669"/>
    <property type="project" value="InterPro"/>
</dbReference>
<dbReference type="GO" id="GO:0006412">
    <property type="term" value="P:translation"/>
    <property type="evidence" value="ECO:0007669"/>
    <property type="project" value="UniProtKB-UniRule"/>
</dbReference>
<dbReference type="FunFam" id="3.90.1030.10:FF:000001">
    <property type="entry name" value="50S ribosomal protein L17"/>
    <property type="match status" value="1"/>
</dbReference>
<dbReference type="Gene3D" id="3.90.1030.10">
    <property type="entry name" value="Ribosomal protein L17"/>
    <property type="match status" value="1"/>
</dbReference>
<dbReference type="HAMAP" id="MF_01368">
    <property type="entry name" value="Ribosomal_bL17"/>
    <property type="match status" value="1"/>
</dbReference>
<dbReference type="InterPro" id="IPR000456">
    <property type="entry name" value="Ribosomal_bL17"/>
</dbReference>
<dbReference type="InterPro" id="IPR047859">
    <property type="entry name" value="Ribosomal_bL17_CS"/>
</dbReference>
<dbReference type="InterPro" id="IPR036373">
    <property type="entry name" value="Ribosomal_bL17_sf"/>
</dbReference>
<dbReference type="NCBIfam" id="TIGR00059">
    <property type="entry name" value="L17"/>
    <property type="match status" value="1"/>
</dbReference>
<dbReference type="PANTHER" id="PTHR14413:SF16">
    <property type="entry name" value="LARGE RIBOSOMAL SUBUNIT PROTEIN BL17M"/>
    <property type="match status" value="1"/>
</dbReference>
<dbReference type="PANTHER" id="PTHR14413">
    <property type="entry name" value="RIBOSOMAL PROTEIN L17"/>
    <property type="match status" value="1"/>
</dbReference>
<dbReference type="Pfam" id="PF01196">
    <property type="entry name" value="Ribosomal_L17"/>
    <property type="match status" value="1"/>
</dbReference>
<dbReference type="SUPFAM" id="SSF64263">
    <property type="entry name" value="Prokaryotic ribosomal protein L17"/>
    <property type="match status" value="1"/>
</dbReference>
<dbReference type="PROSITE" id="PS01167">
    <property type="entry name" value="RIBOSOMAL_L17"/>
    <property type="match status" value="1"/>
</dbReference>